<name>TAF1_CAEEL</name>
<reference evidence="7" key="1">
    <citation type="journal article" date="1998" name="Science">
        <title>Genome sequence of the nematode C. elegans: a platform for investigating biology.</title>
        <authorList>
            <consortium name="The C. elegans sequencing consortium"/>
        </authorList>
    </citation>
    <scope>NUCLEOTIDE SEQUENCE [LARGE SCALE GENOMIC DNA]</scope>
    <source>
        <strain evidence="7">Bristol N2</strain>
    </source>
</reference>
<reference evidence="6" key="2">
    <citation type="journal article" date="2002" name="Genes Dev.">
        <title>A unified nomenclature for TATA box binding protein (TBP)-associated factors (TAFs) involved in RNA polymerase II transcription.</title>
        <authorList>
            <person name="Tora L."/>
        </authorList>
    </citation>
    <scope>NOMENCLATURE</scope>
</reference>
<reference evidence="6" key="3">
    <citation type="journal article" date="2004" name="J. Biol. Chem.">
        <title>An extensive requirement for transcription factor IID-specific TAF-1 in Caenorhabditis elegans embryonic transcription.</title>
        <authorList>
            <person name="Walker A.K."/>
            <person name="Shi Y."/>
            <person name="Blackwell T.K."/>
        </authorList>
    </citation>
    <scope>FUNCTION</scope>
    <scope>SUBCELLULAR LOCATION</scope>
    <scope>DEVELOPMENTAL STAGE</scope>
    <scope>DISRUPTION PHENOTYPE</scope>
</reference>
<dbReference type="EMBL" id="BX284601">
    <property type="protein sequence ID" value="CAB04907.3"/>
    <property type="molecule type" value="Genomic_DNA"/>
</dbReference>
<dbReference type="RefSeq" id="NP_493426.2">
    <property type="nucleotide sequence ID" value="NM_061025.6"/>
</dbReference>
<dbReference type="SMR" id="G5EGM3"/>
<dbReference type="FunCoup" id="G5EGM3">
    <property type="interactions" value="2512"/>
</dbReference>
<dbReference type="IntAct" id="G5EGM3">
    <property type="interactions" value="1"/>
</dbReference>
<dbReference type="STRING" id="6239.W04A8.7.1"/>
<dbReference type="PaxDb" id="6239-W04A8.7"/>
<dbReference type="PeptideAtlas" id="G5EGM3"/>
<dbReference type="EnsemblMetazoa" id="W04A8.7.1">
    <property type="protein sequence ID" value="W04A8.7.1"/>
    <property type="gene ID" value="WBGene00006382"/>
</dbReference>
<dbReference type="GeneID" id="173257"/>
<dbReference type="KEGG" id="cel:CELE_W04A8.7"/>
<dbReference type="AGR" id="WB:WBGene00006382"/>
<dbReference type="CTD" id="173257"/>
<dbReference type="WormBase" id="W04A8.7a">
    <property type="protein sequence ID" value="CE42634"/>
    <property type="gene ID" value="WBGene00006382"/>
    <property type="gene designation" value="taf-1"/>
</dbReference>
<dbReference type="eggNOG" id="KOG0008">
    <property type="taxonomic scope" value="Eukaryota"/>
</dbReference>
<dbReference type="GeneTree" id="ENSGT00940000155242"/>
<dbReference type="HOGENOM" id="CLU_000572_3_1_1"/>
<dbReference type="InParanoid" id="G5EGM3"/>
<dbReference type="OMA" id="RENVRKC"/>
<dbReference type="OrthoDB" id="5752at2759"/>
<dbReference type="PhylomeDB" id="G5EGM3"/>
<dbReference type="Reactome" id="R-CEL-674695">
    <property type="pathway name" value="RNA Polymerase II Pre-transcription Events"/>
</dbReference>
<dbReference type="Reactome" id="R-CEL-73776">
    <property type="pathway name" value="RNA Polymerase II Promoter Escape"/>
</dbReference>
<dbReference type="Reactome" id="R-CEL-73779">
    <property type="pathway name" value="RNA Polymerase II Transcription Pre-Initiation And Promoter Opening"/>
</dbReference>
<dbReference type="Reactome" id="R-CEL-75953">
    <property type="pathway name" value="RNA Polymerase II Transcription Initiation"/>
</dbReference>
<dbReference type="Reactome" id="R-CEL-76042">
    <property type="pathway name" value="RNA Polymerase II Transcription Initiation And Promoter Clearance"/>
</dbReference>
<dbReference type="PRO" id="PR:G5EGM3"/>
<dbReference type="Proteomes" id="UP000001940">
    <property type="component" value="Chromosome I"/>
</dbReference>
<dbReference type="Bgee" id="WBGene00006382">
    <property type="expression patterns" value="Expressed in embryo and 4 other cell types or tissues"/>
</dbReference>
<dbReference type="GO" id="GO:0005634">
    <property type="term" value="C:nucleus"/>
    <property type="evidence" value="ECO:0000314"/>
    <property type="project" value="WormBase"/>
</dbReference>
<dbReference type="GO" id="GO:0005669">
    <property type="term" value="C:transcription factor TFIID complex"/>
    <property type="evidence" value="ECO:0000250"/>
    <property type="project" value="WormBase"/>
</dbReference>
<dbReference type="GO" id="GO:0003677">
    <property type="term" value="F:DNA binding"/>
    <property type="evidence" value="ECO:0007669"/>
    <property type="project" value="InterPro"/>
</dbReference>
<dbReference type="GO" id="GO:0004402">
    <property type="term" value="F:histone acetyltransferase activity"/>
    <property type="evidence" value="ECO:0000250"/>
    <property type="project" value="WormBase"/>
</dbReference>
<dbReference type="GO" id="GO:0004674">
    <property type="term" value="F:protein serine/threonine kinase activity"/>
    <property type="evidence" value="ECO:0000250"/>
    <property type="project" value="WormBase"/>
</dbReference>
<dbReference type="GO" id="GO:0016251">
    <property type="term" value="F:RNA polymerase II general transcription initiation factor activity"/>
    <property type="evidence" value="ECO:0000318"/>
    <property type="project" value="GO_Central"/>
</dbReference>
<dbReference type="GO" id="GO:0017025">
    <property type="term" value="F:TBP-class protein binding"/>
    <property type="evidence" value="ECO:0000318"/>
    <property type="project" value="GO_Central"/>
</dbReference>
<dbReference type="GO" id="GO:0009792">
    <property type="term" value="P:embryo development ending in birth or egg hatching"/>
    <property type="evidence" value="ECO:0000315"/>
    <property type="project" value="WormBase"/>
</dbReference>
<dbReference type="GO" id="GO:0051123">
    <property type="term" value="P:RNA polymerase II preinitiation complex assembly"/>
    <property type="evidence" value="ECO:0000318"/>
    <property type="project" value="GO_Central"/>
</dbReference>
<dbReference type="GO" id="GO:0006367">
    <property type="term" value="P:transcription initiation at RNA polymerase II promoter"/>
    <property type="evidence" value="ECO:0000315"/>
    <property type="project" value="WormBase"/>
</dbReference>
<dbReference type="CDD" id="cd05511">
    <property type="entry name" value="Bromo_TFIID"/>
    <property type="match status" value="2"/>
</dbReference>
<dbReference type="FunFam" id="1.20.920.10:FF:000066">
    <property type="entry name" value="Transcription initiation factor TFIID subunit 1"/>
    <property type="match status" value="1"/>
</dbReference>
<dbReference type="FunFam" id="1.20.920.10:FF:000108">
    <property type="entry name" value="Transcription initiation factor TFIID subunit 1"/>
    <property type="match status" value="1"/>
</dbReference>
<dbReference type="Gene3D" id="1.20.920.10">
    <property type="entry name" value="Bromodomain-like"/>
    <property type="match status" value="2"/>
</dbReference>
<dbReference type="InterPro" id="IPR001487">
    <property type="entry name" value="Bromodomain"/>
</dbReference>
<dbReference type="InterPro" id="IPR036427">
    <property type="entry name" value="Bromodomain-like_sf"/>
</dbReference>
<dbReference type="InterPro" id="IPR018359">
    <property type="entry name" value="Bromodomain_CS"/>
</dbReference>
<dbReference type="InterPro" id="IPR040240">
    <property type="entry name" value="TAF1"/>
</dbReference>
<dbReference type="InterPro" id="IPR011177">
    <property type="entry name" value="TAF1_animal"/>
</dbReference>
<dbReference type="InterPro" id="IPR022591">
    <property type="entry name" value="TAF1_HAT_dom"/>
</dbReference>
<dbReference type="InterPro" id="IPR041670">
    <property type="entry name" value="Znf-CCHC_6"/>
</dbReference>
<dbReference type="PANTHER" id="PTHR13900">
    <property type="entry name" value="TRANSCRIPTION INITIATION FACTOR TFIID"/>
    <property type="match status" value="1"/>
</dbReference>
<dbReference type="PANTHER" id="PTHR13900:SF0">
    <property type="entry name" value="TRANSCRIPTION INITIATION FACTOR TFIID SUBUNIT 1"/>
    <property type="match status" value="1"/>
</dbReference>
<dbReference type="Pfam" id="PF00439">
    <property type="entry name" value="Bromodomain"/>
    <property type="match status" value="2"/>
</dbReference>
<dbReference type="Pfam" id="PF12157">
    <property type="entry name" value="DUF3591"/>
    <property type="match status" value="1"/>
</dbReference>
<dbReference type="Pfam" id="PF15288">
    <property type="entry name" value="zf-CCHC_6"/>
    <property type="match status" value="1"/>
</dbReference>
<dbReference type="PIRSF" id="PIRSF003047">
    <property type="entry name" value="TAF1_animal"/>
    <property type="match status" value="1"/>
</dbReference>
<dbReference type="PRINTS" id="PR00503">
    <property type="entry name" value="BROMODOMAIN"/>
</dbReference>
<dbReference type="SMART" id="SM00297">
    <property type="entry name" value="BROMO"/>
    <property type="match status" value="2"/>
</dbReference>
<dbReference type="SUPFAM" id="SSF47370">
    <property type="entry name" value="Bromodomain"/>
    <property type="match status" value="2"/>
</dbReference>
<dbReference type="PROSITE" id="PS00633">
    <property type="entry name" value="BROMODOMAIN_1"/>
    <property type="match status" value="1"/>
</dbReference>
<dbReference type="PROSITE" id="PS50014">
    <property type="entry name" value="BROMODOMAIN_2"/>
    <property type="match status" value="2"/>
</dbReference>
<comment type="function">
    <text evidence="1 5">The TFIID basal transcription factor complex plays a major role in the initiation of RNA polymerase II (Pol II)-dependent transcription (By similarity). TFIID recognizes and binds promoters via its subunit tbp-1, a TATA-box-binding protein, and promotes assembly of the pre-initiation complex (PIC) (By similarity). The TFIID complex consists of tbp-1 and TBP-associated factors (TAFs), including taf-1 (By similarity). May regulate RNA polymerase II activity and thereby may control transcription initiation by RNA polymerase II (PubMed:14726532). Required for early embryonic development (PubMed:14726532). Essential for embryonic transcription of several genes (PubMed:14726532).</text>
</comment>
<comment type="subunit">
    <text evidence="1">Component of the TFIID basal transcription factor complex, composed of TATA-box-binding protein tbp-1, and a number of TBP-associated factors (TAFs).</text>
</comment>
<comment type="subcellular location">
    <subcellularLocation>
        <location evidence="5">Nucleus</location>
    </subcellularLocation>
</comment>
<comment type="developmental stage">
    <text evidence="5">Expressed in embryo.</text>
</comment>
<comment type="disruption phenotype">
    <text evidence="5">RNAi-mediated knockdown causes embryonic arrest at the 100-cell stage, premature cell division of E2 cells, Ea and Ep, severe loss of polymerase II large subunit ama-1 phosphorylation and reduction in the transcription of several embryonic genes.</text>
</comment>
<comment type="similarity">
    <text evidence="6">Belongs to the TAF1 family.</text>
</comment>
<proteinExistence type="evidence at transcript level"/>
<accession>G5EGM3</accession>
<evidence type="ECO:0000250" key="1">
    <source>
        <dbReference type="UniProtKB" id="P21675"/>
    </source>
</evidence>
<evidence type="ECO:0000255" key="2"/>
<evidence type="ECO:0000255" key="3">
    <source>
        <dbReference type="PROSITE-ProRule" id="PRU00035"/>
    </source>
</evidence>
<evidence type="ECO:0000256" key="4">
    <source>
        <dbReference type="SAM" id="MobiDB-lite"/>
    </source>
</evidence>
<evidence type="ECO:0000269" key="5">
    <source>
    </source>
</evidence>
<evidence type="ECO:0000305" key="6"/>
<evidence type="ECO:0000312" key="7">
    <source>
        <dbReference type="Proteomes" id="UP000001940"/>
    </source>
</evidence>
<evidence type="ECO:0000312" key="8">
    <source>
        <dbReference type="WormBase" id="W04A8.7a"/>
    </source>
</evidence>
<organism>
    <name type="scientific">Caenorhabditis elegans</name>
    <dbReference type="NCBI Taxonomy" id="6239"/>
    <lineage>
        <taxon>Eukaryota</taxon>
        <taxon>Metazoa</taxon>
        <taxon>Ecdysozoa</taxon>
        <taxon>Nematoda</taxon>
        <taxon>Chromadorea</taxon>
        <taxon>Rhabditida</taxon>
        <taxon>Rhabditina</taxon>
        <taxon>Rhabditomorpha</taxon>
        <taxon>Rhabditoidea</taxon>
        <taxon>Rhabditidae</taxon>
        <taxon>Peloderinae</taxon>
        <taxon>Caenorhabditis</taxon>
    </lineage>
</organism>
<feature type="chain" id="PRO_0000435363" description="Transcription initiation factor TFIID subunit 1" evidence="6">
    <location>
        <begin position="1"/>
        <end position="1744"/>
    </location>
</feature>
<feature type="domain" description="Bromo 1" evidence="3">
    <location>
        <begin position="1404"/>
        <end position="1512"/>
    </location>
</feature>
<feature type="domain" description="Bromo 2" evidence="3">
    <location>
        <begin position="1537"/>
        <end position="1634"/>
    </location>
</feature>
<feature type="region of interest" description="Disordered" evidence="4">
    <location>
        <begin position="1"/>
        <end position="65"/>
    </location>
</feature>
<feature type="region of interest" description="Disordered" evidence="4">
    <location>
        <begin position="248"/>
        <end position="275"/>
    </location>
</feature>
<feature type="region of interest" description="Disordered" evidence="4">
    <location>
        <begin position="429"/>
        <end position="488"/>
    </location>
</feature>
<feature type="region of interest" description="Disordered" evidence="4">
    <location>
        <begin position="1001"/>
        <end position="1024"/>
    </location>
</feature>
<feature type="region of interest" description="Disordered" evidence="4">
    <location>
        <begin position="1071"/>
        <end position="1098"/>
    </location>
</feature>
<feature type="region of interest" description="Disordered" evidence="4">
    <location>
        <begin position="1186"/>
        <end position="1213"/>
    </location>
</feature>
<feature type="region of interest" description="Disordered" evidence="4">
    <location>
        <begin position="1319"/>
        <end position="1391"/>
    </location>
</feature>
<feature type="region of interest" description="Disordered" evidence="4">
    <location>
        <begin position="1666"/>
        <end position="1702"/>
    </location>
</feature>
<feature type="region of interest" description="Disordered" evidence="4">
    <location>
        <begin position="1714"/>
        <end position="1744"/>
    </location>
</feature>
<feature type="coiled-coil region" evidence="2">
    <location>
        <begin position="1019"/>
        <end position="1080"/>
    </location>
</feature>
<feature type="coiled-coil region" evidence="2">
    <location>
        <begin position="1161"/>
        <end position="1204"/>
    </location>
</feature>
<feature type="coiled-coil region" evidence="2">
    <location>
        <begin position="1282"/>
        <end position="1314"/>
    </location>
</feature>
<feature type="short sequence motif" description="Nuclear localization signal" evidence="6">
    <location>
        <begin position="1379"/>
        <end position="1386"/>
    </location>
</feature>
<feature type="compositionally biased region" description="Polar residues" evidence="4">
    <location>
        <begin position="43"/>
        <end position="52"/>
    </location>
</feature>
<feature type="compositionally biased region" description="Basic and acidic residues" evidence="4">
    <location>
        <begin position="55"/>
        <end position="64"/>
    </location>
</feature>
<feature type="compositionally biased region" description="Basic and acidic residues" evidence="4">
    <location>
        <begin position="429"/>
        <end position="439"/>
    </location>
</feature>
<feature type="compositionally biased region" description="Basic residues" evidence="4">
    <location>
        <begin position="440"/>
        <end position="449"/>
    </location>
</feature>
<feature type="compositionally biased region" description="Polar residues" evidence="4">
    <location>
        <begin position="477"/>
        <end position="488"/>
    </location>
</feature>
<feature type="compositionally biased region" description="Acidic residues" evidence="4">
    <location>
        <begin position="1012"/>
        <end position="1024"/>
    </location>
</feature>
<feature type="compositionally biased region" description="Basic and acidic residues" evidence="4">
    <location>
        <begin position="1076"/>
        <end position="1093"/>
    </location>
</feature>
<feature type="compositionally biased region" description="Basic and acidic residues" evidence="4">
    <location>
        <begin position="1186"/>
        <end position="1205"/>
    </location>
</feature>
<feature type="compositionally biased region" description="Gly residues" evidence="4">
    <location>
        <begin position="1319"/>
        <end position="1344"/>
    </location>
</feature>
<feature type="compositionally biased region" description="Polar residues" evidence="4">
    <location>
        <begin position="1354"/>
        <end position="1363"/>
    </location>
</feature>
<feature type="compositionally biased region" description="Low complexity" evidence="4">
    <location>
        <begin position="1372"/>
        <end position="1381"/>
    </location>
</feature>
<feature type="compositionally biased region" description="Acidic residues" evidence="4">
    <location>
        <begin position="1666"/>
        <end position="1694"/>
    </location>
</feature>
<gene>
    <name evidence="8" type="primary">taf-1</name>
    <name evidence="8" type="ORF">W04A8.7</name>
</gene>
<keyword id="KW-0103">Bromodomain</keyword>
<keyword id="KW-0175">Coiled coil</keyword>
<keyword id="KW-0539">Nucleus</keyword>
<keyword id="KW-1185">Reference proteome</keyword>
<keyword id="KW-0677">Repeat</keyword>
<keyword id="KW-0804">Transcription</keyword>
<keyword id="KW-0805">Transcription regulation</keyword>
<sequence length="1744" mass="198522">MNNTHHHTNGYRTEKPKNEEDLEDPYANLSDFYKNHPAARNEACSSASNGGSKSVKMEPKVEKNEEFEEYIGDPVRLEDMEPFARPSLRDDAPLSSILHPDLDGIDPRIFFKDFNPNKTLRFSRLFAQNIKHTSRAEIWWASRTFSKHQRKKEPEEPLADDVIVGAKKLKLNIIEKVPRVMLADDEEERMRRPILTDAEEMAKKNEEGTVVQPWRTGPAKIWYDMMNLPMTSQAVNYGFKLKKSPQKVSIRSGKPLNYRTPDDLPSTSSGPAPNSAPFLDKVEVIDKSCEASTSEDILLPYQVIEWENDVILDGEEVKDQLLEEFSNGRGCGWIPTQYTRTYEHFVYAANNNAFEQMFDGKSAPINLTGPDSAILPTPGHSIFPSAPCDLDILPWETNIIWDADAMPSTLEPIDFLVDFQDDPLIYGMPEDRRHDEGPDHHHHHHHHRKDGQYTKKSKMILGQVQQRQKQEEDEQMESTMAQFTDNDPFNLSNDDYYVPKATSKTLSNNSLLIQHSTPATNIATHFFPTHPSAFRLRYWHRTPFTRRIVRHWQPMRFQPIQTPVKHQQRVAAMREAMRQAQGGGEVFYMRDVQDLSGKDETLVMIEYSEEHPVILSQPGMASKMKNYFKRRQANDSEPTFTFGELAFSHQIPFLGQLQPGQSLQSIENMLYRAPIYLHKRQNTDFLLIRSMNQWYIRPLPSIFVAGQQCPLYEVPSPNSKRATVFVRDFLFAFIYRLFWASDSSPRRLKMDDVRNAFPHYAESNIRKRLKMCSTFVRQGSETYWSLKPDFRLPSKEEVLSMVTPEMCCAQYSMMAAEQRLKDAGYGEKYFFTPENDEGSEDEVTIEDEIKCAPWNTTRAFLASQREKCLLDQTGIADPTGCGQGFSYVRVSQKPHKDENATPVPKKLVTGTNADLRKLPLKEAKQICRGYGVKEEEISALTRWEIIDVIRTLSTQAAKATKDGEIIAVSGMARFARGNTRFSSADMQEKYRKHCQRIFDQQNQTLANTDPISTDDDSTDADSDNEELASRLESMLEANKGKKNISMSEKAKIDFETEEKEREDLKRMIHGTTNQVEKGEKKEEGEVTAEEKKSASQFGEDVAMSASKISGITANQQLKIYRTCKGPDGKDVTRIEIVTRPQLIEAYTRIRMTRDDTFIQVYAQMDEQYKEEKRKKKRRLQDQIRRMKKNEEKAAHKVQKMTEKKVKPIKPPNPNLQKMRCSACHAYGHMKTNRNCPLYGKDPLTPLKEEDEGSTIMTSVSSASLVAPDAVQVDGTKVKFNLNFAEIRKEQNREEKLKRKLAKMAEAAVRERQMAHLMEYGGGASSSGGAGGGGSGIGGSTGGGITDNDDDDRFSQISGTSSFLNGPPGAIRGGNRNSSVSGSKRRSSMMPEEDYLQGPLKVAHRARADPKVVMSSMLTDIVNELKMISGSDAFVTPVNSKKVVDYYNIIKNPISLQEIKKKISEQSYLLRKDFLDDIKLMFDNSRMYNGDNNILTLTAQQMLQLAGKRMIEREQKFIGLEKQINPLLDTNDLIGFSYLLGEIVQKMKNIPKSALFHTRVDPKKIPAYYLKISDPMDLSIMEQKSKSQEYKSIDEFLKDAEKIYTNSVVFNGAESVYSLKAKEMFEMAEMLVKDQMDTLGELERNINPSAINDAAAAQRGLAMDSDDHMDEMEDHPTEEEEEDDDDEIMDDDMDIDATGYSYDHDDNVAVGQIFNDLAMSDSDEDERAEDVKRPANGDDNLLDSF</sequence>
<protein>
    <recommendedName>
        <fullName evidence="1">Transcription initiation factor TFIID subunit 1</fullName>
    </recommendedName>
    <alternativeName>
        <fullName evidence="8">TBP-associated transcription factor 1</fullName>
    </alternativeName>
</protein>